<accession>Q14696</accession>
<accession>B4DW84</accession>
<accession>D3DW96</accession>
<accession>Q969U1</accession>
<keyword id="KW-0025">Alternative splicing</keyword>
<keyword id="KW-0143">Chaperone</keyword>
<keyword id="KW-0225">Disease variant</keyword>
<keyword id="KW-0256">Endoplasmic reticulum</keyword>
<keyword id="KW-0325">Glycoprotein</keyword>
<keyword id="KW-1065">Osteogenesis imperfecta</keyword>
<keyword id="KW-1267">Proteomics identification</keyword>
<keyword id="KW-1185">Reference proteome</keyword>
<keyword id="KW-0732">Signal</keyword>
<keyword id="KW-0879">Wnt signaling pathway</keyword>
<protein>
    <recommendedName>
        <fullName evidence="9">LRP chaperone MESD</fullName>
    </recommendedName>
    <alternativeName>
        <fullName>LDLR chaperone MESD</fullName>
    </alternativeName>
    <alternativeName>
        <fullName evidence="10">Mesoderm development LRP chaperone MESD</fullName>
    </alternativeName>
    <alternativeName>
        <fullName>Mesoderm development candidate 2</fullName>
    </alternativeName>
    <alternativeName>
        <fullName>Mesoderm development protein</fullName>
    </alternativeName>
    <alternativeName>
        <fullName>Renal carcinoma antigen NY-REN-61</fullName>
    </alternativeName>
</protein>
<evidence type="ECO:0000250" key="1">
    <source>
        <dbReference type="UniProtKB" id="Q9ERE7"/>
    </source>
</evidence>
<evidence type="ECO:0000255" key="2"/>
<evidence type="ECO:0000256" key="3">
    <source>
        <dbReference type="SAM" id="MobiDB-lite"/>
    </source>
</evidence>
<evidence type="ECO:0000269" key="4">
    <source>
    </source>
</evidence>
<evidence type="ECO:0000269" key="5">
    <source>
    </source>
</evidence>
<evidence type="ECO:0000269" key="6">
    <source>
    </source>
</evidence>
<evidence type="ECO:0000269" key="7">
    <source>
    </source>
</evidence>
<evidence type="ECO:0000303" key="8">
    <source>
    </source>
</evidence>
<evidence type="ECO:0000305" key="9"/>
<evidence type="ECO:0000312" key="10">
    <source>
        <dbReference type="HGNC" id="HGNC:13520"/>
    </source>
</evidence>
<dbReference type="EMBL" id="D42039">
    <property type="protein sequence ID" value="BAA07640.2"/>
    <property type="status" value="ALT_INIT"/>
    <property type="molecule type" value="mRNA"/>
</dbReference>
<dbReference type="EMBL" id="AY359110">
    <property type="protein sequence ID" value="AAQ89468.1"/>
    <property type="molecule type" value="mRNA"/>
</dbReference>
<dbReference type="EMBL" id="AK301416">
    <property type="protein sequence ID" value="BAG62946.1"/>
    <property type="molecule type" value="mRNA"/>
</dbReference>
<dbReference type="EMBL" id="AC027808">
    <property type="status" value="NOT_ANNOTATED_CDS"/>
    <property type="molecule type" value="Genomic_DNA"/>
</dbReference>
<dbReference type="EMBL" id="AC068870">
    <property type="status" value="NOT_ANNOTATED_CDS"/>
    <property type="molecule type" value="Genomic_DNA"/>
</dbReference>
<dbReference type="EMBL" id="CH471136">
    <property type="protein sequence ID" value="EAW99109.1"/>
    <property type="molecule type" value="Genomic_DNA"/>
</dbReference>
<dbReference type="EMBL" id="CH471136">
    <property type="protein sequence ID" value="EAW99110.1"/>
    <property type="molecule type" value="Genomic_DNA"/>
</dbReference>
<dbReference type="EMBL" id="BC009210">
    <property type="protein sequence ID" value="AAH09210.1"/>
    <property type="molecule type" value="mRNA"/>
</dbReference>
<dbReference type="EMBL" id="BC012746">
    <property type="protein sequence ID" value="AAH12746.1"/>
    <property type="molecule type" value="mRNA"/>
</dbReference>
<dbReference type="CCDS" id="CCDS32308.1">
    <molecule id="Q14696-1"/>
</dbReference>
<dbReference type="RefSeq" id="NP_055969.1">
    <molecule id="Q14696-1"/>
    <property type="nucleotide sequence ID" value="NM_015154.3"/>
</dbReference>
<dbReference type="SMR" id="Q14696"/>
<dbReference type="BioGRID" id="116794">
    <property type="interactions" value="163"/>
</dbReference>
<dbReference type="FunCoup" id="Q14696">
    <property type="interactions" value="2085"/>
</dbReference>
<dbReference type="IntAct" id="Q14696">
    <property type="interactions" value="111"/>
</dbReference>
<dbReference type="MINT" id="Q14696"/>
<dbReference type="STRING" id="9606.ENSP00000261758"/>
<dbReference type="GlyCosmos" id="Q14696">
    <property type="glycosylation" value="1 site, No reported glycans"/>
</dbReference>
<dbReference type="GlyGen" id="Q14696">
    <property type="glycosylation" value="3 sites, 1 O-linked glycan (2 sites)"/>
</dbReference>
<dbReference type="iPTMnet" id="Q14696"/>
<dbReference type="PhosphoSitePlus" id="Q14696"/>
<dbReference type="BioMuta" id="MESD"/>
<dbReference type="DMDM" id="24418861"/>
<dbReference type="OGP" id="Q14696"/>
<dbReference type="jPOST" id="Q14696"/>
<dbReference type="MassIVE" id="Q14696"/>
<dbReference type="PaxDb" id="9606-ENSP00000261758"/>
<dbReference type="PeptideAtlas" id="Q14696"/>
<dbReference type="ProteomicsDB" id="5321"/>
<dbReference type="ProteomicsDB" id="60136">
    <molecule id="Q14696-1"/>
</dbReference>
<dbReference type="Pumba" id="Q14696"/>
<dbReference type="TopDownProteomics" id="Q14696-1">
    <molecule id="Q14696-1"/>
</dbReference>
<dbReference type="ABCD" id="Q14696">
    <property type="antibodies" value="1 sequenced antibody"/>
</dbReference>
<dbReference type="Antibodypedia" id="27911">
    <property type="antibodies" value="182 antibodies from 35 providers"/>
</dbReference>
<dbReference type="DNASU" id="23184"/>
<dbReference type="Ensembl" id="ENST00000261758.6">
    <molecule id="Q14696-1"/>
    <property type="protein sequence ID" value="ENSP00000261758.4"/>
    <property type="gene ID" value="ENSG00000117899.11"/>
</dbReference>
<dbReference type="Ensembl" id="ENST00000422879.3">
    <molecule id="Q14696-2"/>
    <property type="protein sequence ID" value="ENSP00000403839.3"/>
    <property type="gene ID" value="ENSG00000117899.11"/>
</dbReference>
<dbReference type="Ensembl" id="ENST00000561312.5">
    <molecule id="Q14696-1"/>
    <property type="protein sequence ID" value="ENSP00000453430.1"/>
    <property type="gene ID" value="ENSG00000117899.11"/>
</dbReference>
<dbReference type="Ensembl" id="ENST00000619987.4">
    <molecule id="Q14696-1"/>
    <property type="protein sequence ID" value="ENSP00000482455.1"/>
    <property type="gene ID" value="ENSG00000117899.11"/>
</dbReference>
<dbReference type="GeneID" id="23184"/>
<dbReference type="KEGG" id="hsa:23184"/>
<dbReference type="MANE-Select" id="ENST00000261758.6">
    <property type="protein sequence ID" value="ENSP00000261758.4"/>
    <property type="RefSeq nucleotide sequence ID" value="NM_015154.3"/>
    <property type="RefSeq protein sequence ID" value="NP_055969.1"/>
</dbReference>
<dbReference type="UCSC" id="uc002bfy.2">
    <molecule id="Q14696-1"/>
    <property type="organism name" value="human"/>
</dbReference>
<dbReference type="AGR" id="HGNC:13520"/>
<dbReference type="CTD" id="23184"/>
<dbReference type="DisGeNET" id="23184"/>
<dbReference type="GeneCards" id="MESD"/>
<dbReference type="HGNC" id="HGNC:13520">
    <property type="gene designation" value="MESD"/>
</dbReference>
<dbReference type="HPA" id="ENSG00000117899">
    <property type="expression patterns" value="Low tissue specificity"/>
</dbReference>
<dbReference type="MalaCards" id="MESD"/>
<dbReference type="MIM" id="607783">
    <property type="type" value="gene"/>
</dbReference>
<dbReference type="MIM" id="618644">
    <property type="type" value="phenotype"/>
</dbReference>
<dbReference type="neXtProt" id="NX_Q14696"/>
<dbReference type="OpenTargets" id="ENSG00000117899"/>
<dbReference type="Orphanet" id="216804">
    <property type="disease" value="Osteogenesis imperfecta type 2"/>
</dbReference>
<dbReference type="PharmGKB" id="PA30761"/>
<dbReference type="VEuPathDB" id="HostDB:ENSG00000117899"/>
<dbReference type="eggNOG" id="KOG4357">
    <property type="taxonomic scope" value="Eukaryota"/>
</dbReference>
<dbReference type="GeneTree" id="ENSGT00390000000993"/>
<dbReference type="HOGENOM" id="CLU_111621_0_0_1"/>
<dbReference type="InParanoid" id="Q14696"/>
<dbReference type="OMA" id="QQRCADV"/>
<dbReference type="OrthoDB" id="75833at2759"/>
<dbReference type="PAN-GO" id="Q14696">
    <property type="GO annotations" value="1 GO annotation based on evolutionary models"/>
</dbReference>
<dbReference type="PhylomeDB" id="Q14696"/>
<dbReference type="TreeFam" id="TF315614"/>
<dbReference type="PathwayCommons" id="Q14696"/>
<dbReference type="SignaLink" id="Q14696"/>
<dbReference type="BioGRID-ORCS" id="23184">
    <property type="hits" value="83 hits in 1166 CRISPR screens"/>
</dbReference>
<dbReference type="ChiTaRS" id="MESDC2">
    <property type="organism name" value="human"/>
</dbReference>
<dbReference type="GeneWiki" id="MESDC2"/>
<dbReference type="GenomeRNAi" id="23184"/>
<dbReference type="Pharos" id="Q14696">
    <property type="development level" value="Tbio"/>
</dbReference>
<dbReference type="PRO" id="PR:Q14696"/>
<dbReference type="Proteomes" id="UP000005640">
    <property type="component" value="Chromosome 15"/>
</dbReference>
<dbReference type="RNAct" id="Q14696">
    <property type="molecule type" value="protein"/>
</dbReference>
<dbReference type="Bgee" id="ENSG00000117899">
    <property type="expression patterns" value="Expressed in epithelial cell of pancreas and 196 other cell types or tissues"/>
</dbReference>
<dbReference type="ExpressionAtlas" id="Q14696">
    <property type="expression patterns" value="baseline and differential"/>
</dbReference>
<dbReference type="GO" id="GO:0005783">
    <property type="term" value="C:endoplasmic reticulum"/>
    <property type="evidence" value="ECO:0000315"/>
    <property type="project" value="UniProtKB"/>
</dbReference>
<dbReference type="GO" id="GO:0005886">
    <property type="term" value="C:plasma membrane"/>
    <property type="evidence" value="ECO:0007669"/>
    <property type="project" value="Ensembl"/>
</dbReference>
<dbReference type="GO" id="GO:0042802">
    <property type="term" value="F:identical protein binding"/>
    <property type="evidence" value="ECO:0007669"/>
    <property type="project" value="Ensembl"/>
</dbReference>
<dbReference type="GO" id="GO:0050750">
    <property type="term" value="F:low-density lipoprotein particle receptor binding"/>
    <property type="evidence" value="ECO:0000318"/>
    <property type="project" value="GO_Central"/>
</dbReference>
<dbReference type="GO" id="GO:0044183">
    <property type="term" value="F:protein folding chaperone"/>
    <property type="evidence" value="ECO:0007669"/>
    <property type="project" value="Ensembl"/>
</dbReference>
<dbReference type="GO" id="GO:0007498">
    <property type="term" value="P:mesoderm development"/>
    <property type="evidence" value="ECO:0000303"/>
    <property type="project" value="UniProtKB"/>
</dbReference>
<dbReference type="GO" id="GO:0001503">
    <property type="term" value="P:ossification"/>
    <property type="evidence" value="ECO:0000315"/>
    <property type="project" value="UniProtKB"/>
</dbReference>
<dbReference type="GO" id="GO:0006909">
    <property type="term" value="P:phagocytosis"/>
    <property type="evidence" value="ECO:0000250"/>
    <property type="project" value="UniProtKB"/>
</dbReference>
<dbReference type="GO" id="GO:1904395">
    <property type="term" value="P:positive regulation of skeletal muscle acetylcholine-gated channel clustering"/>
    <property type="evidence" value="ECO:0000250"/>
    <property type="project" value="UniProtKB"/>
</dbReference>
<dbReference type="GO" id="GO:0030177">
    <property type="term" value="P:positive regulation of Wnt signaling pathway"/>
    <property type="evidence" value="ECO:0007669"/>
    <property type="project" value="Ensembl"/>
</dbReference>
<dbReference type="GO" id="GO:0006457">
    <property type="term" value="P:protein folding"/>
    <property type="evidence" value="ECO:0000315"/>
    <property type="project" value="UniProtKB"/>
</dbReference>
<dbReference type="GO" id="GO:0034394">
    <property type="term" value="P:protein localization to cell surface"/>
    <property type="evidence" value="ECO:0000250"/>
    <property type="project" value="UniProtKB"/>
</dbReference>
<dbReference type="GO" id="GO:0072659">
    <property type="term" value="P:protein localization to plasma membrane"/>
    <property type="evidence" value="ECO:0007669"/>
    <property type="project" value="Ensembl"/>
</dbReference>
<dbReference type="GO" id="GO:0016055">
    <property type="term" value="P:Wnt signaling pathway"/>
    <property type="evidence" value="ECO:0007669"/>
    <property type="project" value="UniProtKB-KW"/>
</dbReference>
<dbReference type="FunFam" id="3.30.70.260:FF:000031">
    <property type="entry name" value="LDLR chaperone MESD"/>
    <property type="match status" value="1"/>
</dbReference>
<dbReference type="Gene3D" id="3.30.70.260">
    <property type="match status" value="1"/>
</dbReference>
<dbReference type="Gene3D" id="6.10.250.640">
    <property type="match status" value="1"/>
</dbReference>
<dbReference type="InterPro" id="IPR019330">
    <property type="entry name" value="MESD"/>
</dbReference>
<dbReference type="PANTHER" id="PTHR17600:SF2">
    <property type="entry name" value="LRP CHAPERONE MESD"/>
    <property type="match status" value="1"/>
</dbReference>
<dbReference type="PANTHER" id="PTHR17600">
    <property type="entry name" value="MESODERM DEVELOPMENT CANDIDATE 2"/>
    <property type="match status" value="1"/>
</dbReference>
<dbReference type="Pfam" id="PF10185">
    <property type="entry name" value="Mesd"/>
    <property type="match status" value="1"/>
</dbReference>
<gene>
    <name evidence="10" type="primary">MESD</name>
    <name type="synonym">KIAA0081</name>
    <name type="synonym">MESDC2</name>
    <name type="synonym">MESDM</name>
    <name type="ORF">UNQ1911/PRO4369</name>
</gene>
<reference key="1">
    <citation type="journal article" date="1995" name="DNA Res.">
        <title>Prediction of the coding sequences of unidentified human genes. III. The coding sequences of 40 new genes (KIAA0081-KIAA0120) deduced by analysis of cDNA clones from human cell line KG-1.</title>
        <authorList>
            <person name="Nagase T."/>
            <person name="Miyajima N."/>
            <person name="Tanaka A."/>
            <person name="Sazuka T."/>
            <person name="Seki N."/>
            <person name="Sato S."/>
            <person name="Tabata S."/>
            <person name="Ishikawa K."/>
            <person name="Kawarabayasi Y."/>
            <person name="Kotani H."/>
            <person name="Nomura N."/>
        </authorList>
    </citation>
    <scope>NUCLEOTIDE SEQUENCE [LARGE SCALE MRNA] (ISOFORM 1)</scope>
    <source>
        <tissue>Bone marrow</tissue>
    </source>
</reference>
<reference key="2">
    <citation type="journal article" date="2002" name="DNA Res.">
        <title>Construction of expression-ready cDNA clones for KIAA genes: manual curation of 330 KIAA cDNA clones.</title>
        <authorList>
            <person name="Nakajima D."/>
            <person name="Okazaki N."/>
            <person name="Yamakawa H."/>
            <person name="Kikuno R."/>
            <person name="Ohara O."/>
            <person name="Nagase T."/>
        </authorList>
    </citation>
    <scope>SEQUENCE REVISION</scope>
</reference>
<reference key="3">
    <citation type="journal article" date="2003" name="Genome Res.">
        <title>The secreted protein discovery initiative (SPDI), a large-scale effort to identify novel human secreted and transmembrane proteins: a bioinformatics assessment.</title>
        <authorList>
            <person name="Clark H.F."/>
            <person name="Gurney A.L."/>
            <person name="Abaya E."/>
            <person name="Baker K."/>
            <person name="Baldwin D.T."/>
            <person name="Brush J."/>
            <person name="Chen J."/>
            <person name="Chow B."/>
            <person name="Chui C."/>
            <person name="Crowley C."/>
            <person name="Currell B."/>
            <person name="Deuel B."/>
            <person name="Dowd P."/>
            <person name="Eaton D."/>
            <person name="Foster J.S."/>
            <person name="Grimaldi C."/>
            <person name="Gu Q."/>
            <person name="Hass P.E."/>
            <person name="Heldens S."/>
            <person name="Huang A."/>
            <person name="Kim H.S."/>
            <person name="Klimowski L."/>
            <person name="Jin Y."/>
            <person name="Johnson S."/>
            <person name="Lee J."/>
            <person name="Lewis L."/>
            <person name="Liao D."/>
            <person name="Mark M.R."/>
            <person name="Robbie E."/>
            <person name="Sanchez C."/>
            <person name="Schoenfeld J."/>
            <person name="Seshagiri S."/>
            <person name="Simmons L."/>
            <person name="Singh J."/>
            <person name="Smith V."/>
            <person name="Stinson J."/>
            <person name="Vagts A."/>
            <person name="Vandlen R.L."/>
            <person name="Watanabe C."/>
            <person name="Wieand D."/>
            <person name="Woods K."/>
            <person name="Xie M.-H."/>
            <person name="Yansura D.G."/>
            <person name="Yi S."/>
            <person name="Yu G."/>
            <person name="Yuan J."/>
            <person name="Zhang M."/>
            <person name="Zhang Z."/>
            <person name="Goddard A.D."/>
            <person name="Wood W.I."/>
            <person name="Godowski P.J."/>
            <person name="Gray A.M."/>
        </authorList>
    </citation>
    <scope>NUCLEOTIDE SEQUENCE [LARGE SCALE MRNA] (ISOFORM 1)</scope>
</reference>
<reference key="4">
    <citation type="journal article" date="2004" name="Nat. Genet.">
        <title>Complete sequencing and characterization of 21,243 full-length human cDNAs.</title>
        <authorList>
            <person name="Ota T."/>
            <person name="Suzuki Y."/>
            <person name="Nishikawa T."/>
            <person name="Otsuki T."/>
            <person name="Sugiyama T."/>
            <person name="Irie R."/>
            <person name="Wakamatsu A."/>
            <person name="Hayashi K."/>
            <person name="Sato H."/>
            <person name="Nagai K."/>
            <person name="Kimura K."/>
            <person name="Makita H."/>
            <person name="Sekine M."/>
            <person name="Obayashi M."/>
            <person name="Nishi T."/>
            <person name="Shibahara T."/>
            <person name="Tanaka T."/>
            <person name="Ishii S."/>
            <person name="Yamamoto J."/>
            <person name="Saito K."/>
            <person name="Kawai Y."/>
            <person name="Isono Y."/>
            <person name="Nakamura Y."/>
            <person name="Nagahari K."/>
            <person name="Murakami K."/>
            <person name="Yasuda T."/>
            <person name="Iwayanagi T."/>
            <person name="Wagatsuma M."/>
            <person name="Shiratori A."/>
            <person name="Sudo H."/>
            <person name="Hosoiri T."/>
            <person name="Kaku Y."/>
            <person name="Kodaira H."/>
            <person name="Kondo H."/>
            <person name="Sugawara M."/>
            <person name="Takahashi M."/>
            <person name="Kanda K."/>
            <person name="Yokoi T."/>
            <person name="Furuya T."/>
            <person name="Kikkawa E."/>
            <person name="Omura Y."/>
            <person name="Abe K."/>
            <person name="Kamihara K."/>
            <person name="Katsuta N."/>
            <person name="Sato K."/>
            <person name="Tanikawa M."/>
            <person name="Yamazaki M."/>
            <person name="Ninomiya K."/>
            <person name="Ishibashi T."/>
            <person name="Yamashita H."/>
            <person name="Murakawa K."/>
            <person name="Fujimori K."/>
            <person name="Tanai H."/>
            <person name="Kimata M."/>
            <person name="Watanabe M."/>
            <person name="Hiraoka S."/>
            <person name="Chiba Y."/>
            <person name="Ishida S."/>
            <person name="Ono Y."/>
            <person name="Takiguchi S."/>
            <person name="Watanabe S."/>
            <person name="Yosida M."/>
            <person name="Hotuta T."/>
            <person name="Kusano J."/>
            <person name="Kanehori K."/>
            <person name="Takahashi-Fujii A."/>
            <person name="Hara H."/>
            <person name="Tanase T.-O."/>
            <person name="Nomura Y."/>
            <person name="Togiya S."/>
            <person name="Komai F."/>
            <person name="Hara R."/>
            <person name="Takeuchi K."/>
            <person name="Arita M."/>
            <person name="Imose N."/>
            <person name="Musashino K."/>
            <person name="Yuuki H."/>
            <person name="Oshima A."/>
            <person name="Sasaki N."/>
            <person name="Aotsuka S."/>
            <person name="Yoshikawa Y."/>
            <person name="Matsunawa H."/>
            <person name="Ichihara T."/>
            <person name="Shiohata N."/>
            <person name="Sano S."/>
            <person name="Moriya S."/>
            <person name="Momiyama H."/>
            <person name="Satoh N."/>
            <person name="Takami S."/>
            <person name="Terashima Y."/>
            <person name="Suzuki O."/>
            <person name="Nakagawa S."/>
            <person name="Senoh A."/>
            <person name="Mizoguchi H."/>
            <person name="Goto Y."/>
            <person name="Shimizu F."/>
            <person name="Wakebe H."/>
            <person name="Hishigaki H."/>
            <person name="Watanabe T."/>
            <person name="Sugiyama A."/>
            <person name="Takemoto M."/>
            <person name="Kawakami B."/>
            <person name="Yamazaki M."/>
            <person name="Watanabe K."/>
            <person name="Kumagai A."/>
            <person name="Itakura S."/>
            <person name="Fukuzumi Y."/>
            <person name="Fujimori Y."/>
            <person name="Komiyama M."/>
            <person name="Tashiro H."/>
            <person name="Tanigami A."/>
            <person name="Fujiwara T."/>
            <person name="Ono T."/>
            <person name="Yamada K."/>
            <person name="Fujii Y."/>
            <person name="Ozaki K."/>
            <person name="Hirao M."/>
            <person name="Ohmori Y."/>
            <person name="Kawabata A."/>
            <person name="Hikiji T."/>
            <person name="Kobatake N."/>
            <person name="Inagaki H."/>
            <person name="Ikema Y."/>
            <person name="Okamoto S."/>
            <person name="Okitani R."/>
            <person name="Kawakami T."/>
            <person name="Noguchi S."/>
            <person name="Itoh T."/>
            <person name="Shigeta K."/>
            <person name="Senba T."/>
            <person name="Matsumura K."/>
            <person name="Nakajima Y."/>
            <person name="Mizuno T."/>
            <person name="Morinaga M."/>
            <person name="Sasaki M."/>
            <person name="Togashi T."/>
            <person name="Oyama M."/>
            <person name="Hata H."/>
            <person name="Watanabe M."/>
            <person name="Komatsu T."/>
            <person name="Mizushima-Sugano J."/>
            <person name="Satoh T."/>
            <person name="Shirai Y."/>
            <person name="Takahashi Y."/>
            <person name="Nakagawa K."/>
            <person name="Okumura K."/>
            <person name="Nagase T."/>
            <person name="Nomura N."/>
            <person name="Kikuchi H."/>
            <person name="Masuho Y."/>
            <person name="Yamashita R."/>
            <person name="Nakai K."/>
            <person name="Yada T."/>
            <person name="Nakamura Y."/>
            <person name="Ohara O."/>
            <person name="Isogai T."/>
            <person name="Sugano S."/>
        </authorList>
    </citation>
    <scope>NUCLEOTIDE SEQUENCE [LARGE SCALE MRNA] (ISOFORM 2)</scope>
    <source>
        <tissue>Synovium</tissue>
    </source>
</reference>
<reference key="5">
    <citation type="journal article" date="2006" name="Nature">
        <title>Analysis of the DNA sequence and duplication history of human chromosome 15.</title>
        <authorList>
            <person name="Zody M.C."/>
            <person name="Garber M."/>
            <person name="Sharpe T."/>
            <person name="Young S.K."/>
            <person name="Rowen L."/>
            <person name="O'Neill K."/>
            <person name="Whittaker C.A."/>
            <person name="Kamal M."/>
            <person name="Chang J.L."/>
            <person name="Cuomo C.A."/>
            <person name="Dewar K."/>
            <person name="FitzGerald M.G."/>
            <person name="Kodira C.D."/>
            <person name="Madan A."/>
            <person name="Qin S."/>
            <person name="Yang X."/>
            <person name="Abbasi N."/>
            <person name="Abouelleil A."/>
            <person name="Arachchi H.M."/>
            <person name="Baradarani L."/>
            <person name="Birditt B."/>
            <person name="Bloom S."/>
            <person name="Bloom T."/>
            <person name="Borowsky M.L."/>
            <person name="Burke J."/>
            <person name="Butler J."/>
            <person name="Cook A."/>
            <person name="DeArellano K."/>
            <person name="DeCaprio D."/>
            <person name="Dorris L. III"/>
            <person name="Dors M."/>
            <person name="Eichler E.E."/>
            <person name="Engels R."/>
            <person name="Fahey J."/>
            <person name="Fleetwood P."/>
            <person name="Friedman C."/>
            <person name="Gearin G."/>
            <person name="Hall J.L."/>
            <person name="Hensley G."/>
            <person name="Johnson E."/>
            <person name="Jones C."/>
            <person name="Kamat A."/>
            <person name="Kaur A."/>
            <person name="Locke D.P."/>
            <person name="Madan A."/>
            <person name="Munson G."/>
            <person name="Jaffe D.B."/>
            <person name="Lui A."/>
            <person name="Macdonald P."/>
            <person name="Mauceli E."/>
            <person name="Naylor J.W."/>
            <person name="Nesbitt R."/>
            <person name="Nicol R."/>
            <person name="O'Leary S.B."/>
            <person name="Ratcliffe A."/>
            <person name="Rounsley S."/>
            <person name="She X."/>
            <person name="Sneddon K.M.B."/>
            <person name="Stewart S."/>
            <person name="Sougnez C."/>
            <person name="Stone S.M."/>
            <person name="Topham K."/>
            <person name="Vincent D."/>
            <person name="Wang S."/>
            <person name="Zimmer A.R."/>
            <person name="Birren B.W."/>
            <person name="Hood L."/>
            <person name="Lander E.S."/>
            <person name="Nusbaum C."/>
        </authorList>
    </citation>
    <scope>NUCLEOTIDE SEQUENCE [LARGE SCALE GENOMIC DNA]</scope>
</reference>
<reference key="6">
    <citation type="submission" date="2005-09" db="EMBL/GenBank/DDBJ databases">
        <authorList>
            <person name="Mural R.J."/>
            <person name="Istrail S."/>
            <person name="Sutton G.G."/>
            <person name="Florea L."/>
            <person name="Halpern A.L."/>
            <person name="Mobarry C.M."/>
            <person name="Lippert R."/>
            <person name="Walenz B."/>
            <person name="Shatkay H."/>
            <person name="Dew I."/>
            <person name="Miller J.R."/>
            <person name="Flanigan M.J."/>
            <person name="Edwards N.J."/>
            <person name="Bolanos R."/>
            <person name="Fasulo D."/>
            <person name="Halldorsson B.V."/>
            <person name="Hannenhalli S."/>
            <person name="Turner R."/>
            <person name="Yooseph S."/>
            <person name="Lu F."/>
            <person name="Nusskern D.R."/>
            <person name="Shue B.C."/>
            <person name="Zheng X.H."/>
            <person name="Zhong F."/>
            <person name="Delcher A.L."/>
            <person name="Huson D.H."/>
            <person name="Kravitz S.A."/>
            <person name="Mouchard L."/>
            <person name="Reinert K."/>
            <person name="Remington K.A."/>
            <person name="Clark A.G."/>
            <person name="Waterman M.S."/>
            <person name="Eichler E.E."/>
            <person name="Adams M.D."/>
            <person name="Hunkapiller M.W."/>
            <person name="Myers E.W."/>
            <person name="Venter J.C."/>
        </authorList>
    </citation>
    <scope>NUCLEOTIDE SEQUENCE [LARGE SCALE GENOMIC DNA]</scope>
</reference>
<reference key="7">
    <citation type="journal article" date="2004" name="Genome Res.">
        <title>The status, quality, and expansion of the NIH full-length cDNA project: the Mammalian Gene Collection (MGC).</title>
        <authorList>
            <consortium name="The MGC Project Team"/>
        </authorList>
    </citation>
    <scope>NUCLEOTIDE SEQUENCE [LARGE SCALE MRNA] (ISOFORM 1)</scope>
    <source>
        <tissue>Placenta</tissue>
        <tissue>Skin</tissue>
    </source>
</reference>
<reference key="8">
    <citation type="journal article" date="1999" name="Int. J. Cancer">
        <title>Antigens recognized by autologous antibody in patients with renal-cell carcinoma.</title>
        <authorList>
            <person name="Scanlan M.J."/>
            <person name="Gordan J.D."/>
            <person name="Williamson B."/>
            <person name="Stockert E."/>
            <person name="Bander N.H."/>
            <person name="Jongeneel C.V."/>
            <person name="Gure A.O."/>
            <person name="Jaeger D."/>
            <person name="Jaeger E."/>
            <person name="Knuth A."/>
            <person name="Chen Y.-T."/>
            <person name="Old L.J."/>
        </authorList>
    </citation>
    <scope>IDENTIFICATION AS A RENAL CANCER ANTIGEN</scope>
    <source>
        <tissue>Renal cell carcinoma</tissue>
    </source>
</reference>
<reference key="9">
    <citation type="journal article" date="2004" name="EMBO J.">
        <title>Boca-dependent maturation of beta-propeller/EGF modules in low-density lipoprotein receptor proteins.</title>
        <authorList>
            <person name="Culi J."/>
            <person name="Springer T.A."/>
            <person name="Mann R.S."/>
        </authorList>
    </citation>
    <scope>FUNCTION</scope>
    <scope>SUBCELLULAR LOCATION</scope>
</reference>
<reference key="10">
    <citation type="journal article" date="2007" name="Biochemistry">
        <title>Requirement for natively unstructured regions of mesoderm development candidate 2 in promoting low-density lipoprotein receptor-related protein 6 maturation.</title>
        <authorList>
            <person name="Koduri V."/>
            <person name="Blacklow S.C."/>
        </authorList>
    </citation>
    <scope>FUNCTION</scope>
    <scope>INTERACTION WITH LRP5 AND LRP6</scope>
    <scope>SUBCELLULAR LOCATION</scope>
</reference>
<reference key="11">
    <citation type="journal article" date="2011" name="BMC Syst. Biol.">
        <title>Initial characterization of the human central proteome.</title>
        <authorList>
            <person name="Burkard T.R."/>
            <person name="Planyavsky M."/>
            <person name="Kaupe I."/>
            <person name="Breitwieser F.P."/>
            <person name="Buerckstuemmer T."/>
            <person name="Bennett K.L."/>
            <person name="Superti-Furga G."/>
            <person name="Colinge J."/>
        </authorList>
    </citation>
    <scope>IDENTIFICATION BY MASS SPECTROMETRY [LARGE SCALE ANALYSIS]</scope>
</reference>
<reference key="12">
    <citation type="journal article" date="2013" name="Proc. Natl. Acad. Sci. U.S.A.">
        <title>Essential roles of grp94 in gut homeostasis via chaperoning canonical Wnt pathway.</title>
        <authorList>
            <person name="Liu B."/>
            <person name="Staron M."/>
            <person name="Hong F."/>
            <person name="Wu B.X."/>
            <person name="Sun S."/>
            <person name="Morales C."/>
            <person name="Crosson C.E."/>
            <person name="Tomlinson S."/>
            <person name="Kim I."/>
            <person name="Wu D."/>
            <person name="Li Z."/>
        </authorList>
    </citation>
    <scope>FUNCTION</scope>
</reference>
<reference key="13">
    <citation type="journal article" date="2014" name="J. Proteomics">
        <title>An enzyme assisted RP-RPLC approach for in-depth analysis of human liver phosphoproteome.</title>
        <authorList>
            <person name="Bian Y."/>
            <person name="Song C."/>
            <person name="Cheng K."/>
            <person name="Dong M."/>
            <person name="Wang F."/>
            <person name="Huang J."/>
            <person name="Sun D."/>
            <person name="Wang L."/>
            <person name="Ye M."/>
            <person name="Zou H."/>
        </authorList>
    </citation>
    <scope>IDENTIFICATION BY MASS SPECTROMETRY [LARGE SCALE ANALYSIS]</scope>
    <source>
        <tissue>Liver</tissue>
    </source>
</reference>
<reference key="14">
    <citation type="journal article" date="2015" name="Proteomics">
        <title>N-terminome analysis of the human mitochondrial proteome.</title>
        <authorList>
            <person name="Vaca Jacome A.S."/>
            <person name="Rabilloud T."/>
            <person name="Schaeffer-Reiss C."/>
            <person name="Rompais M."/>
            <person name="Ayoub D."/>
            <person name="Lane L."/>
            <person name="Bairoch A."/>
            <person name="Van Dorsselaer A."/>
            <person name="Carapito C."/>
        </authorList>
    </citation>
    <scope>IDENTIFICATION BY MASS SPECTROMETRY [LARGE SCALE ANALYSIS]</scope>
</reference>
<reference key="15">
    <citation type="journal article" date="2019" name="Am. J. Hum. Genet.">
        <title>Autosomal-recessive mutations in MESD cause osteogenesis imperfecta.</title>
        <authorList>
            <person name="Moosa S."/>
            <person name="Yamamoto G.L."/>
            <person name="Garbes L."/>
            <person name="Keupp K."/>
            <person name="Beleza-Meireles A."/>
            <person name="Moreno C.A."/>
            <person name="Valadares E.R."/>
            <person name="de Sousa S.B."/>
            <person name="Maia S."/>
            <person name="Saraiva J."/>
            <person name="Honjo R.S."/>
            <person name="Kim C.A."/>
            <person name="Cabral de Menezes H."/>
            <person name="Lausch E."/>
            <person name="Lorini P.V."/>
            <person name="Lamounier A. Jr."/>
            <person name="Carniero T.C.B."/>
            <person name="Giunta C."/>
            <person name="Rohrbach M."/>
            <person name="Janner M."/>
            <person name="Semler O."/>
            <person name="Beleggia F."/>
            <person name="Li Y."/>
            <person name="Yigit G."/>
            <person name="Reintjes N."/>
            <person name="Altmueller J."/>
            <person name="Nuernberg P."/>
            <person name="Cavalcanti D.P."/>
            <person name="Zabel B."/>
            <person name="Warman M.L."/>
            <person name="Bertola D.R."/>
            <person name="Wollnik B."/>
            <person name="Netzer C."/>
        </authorList>
    </citation>
    <scope>INVOLVEMENT IN OI20</scope>
    <scope>VARIANT OI20 226-ARG--LEU-234 DEL</scope>
</reference>
<comment type="function">
    <text evidence="1 4 5 6">Chaperone specifically assisting the folding of beta-propeller/EGF modules within the family of low-density lipoprotein receptors (LDLRs) (PubMed:15014448). Acts as a modulator of the Wnt pathway through chaperoning the coreceptors of the canonical Wnt pathway, LRP5 and LRP6, to the plasma membrane (PubMed:17488095, PubMed:23572575). Essential for specification of embryonic polarity and mesoderm induction. Plays an essential role in neuromuscular junction (NMJ) formation by promoting cell-surface expression of LRP4 (By similarity). May regulate phagocytosis of apoptotic retinal pigment epithelium (RPE) cells (By similarity).</text>
</comment>
<comment type="subunit">
    <text evidence="1 5">Monomer. Interacts with LRP5; the interaction prevents LRP5 from forming aggregates and chaperones LRP6 to the plasma membrane (PubMed:17488095). Interacts with LRP6; the interaction prevents LRP6 from forming aggregates and chaperones LRP6 to the plasma membrane (PubMed:17488095). Interacts with LRP4; the interaction promotes glycosylation of LRP4 and its cell-surface expression (By similarity).</text>
</comment>
<comment type="interaction">
    <interactant intactId="EBI-6165891">
        <id>Q14696</id>
    </interactant>
    <interactant intactId="EBI-3908684">
        <id>Q9H221</id>
        <label>ABCG8</label>
    </interactant>
    <organismsDiffer>false</organismsDiffer>
    <experiments>3</experiments>
</comment>
<comment type="interaction">
    <interactant intactId="EBI-6165891">
        <id>Q14696</id>
    </interactant>
    <interactant intactId="EBI-9105722">
        <id>Q9NX38</id>
        <label>ABITRAM</label>
    </interactant>
    <organismsDiffer>false</organismsDiffer>
    <experiments>3</experiments>
</comment>
<comment type="interaction">
    <interactant intactId="EBI-6165891">
        <id>Q14696</id>
    </interactant>
    <interactant intactId="EBI-18657673">
        <id>Q8N6N7</id>
        <label>ACBD7</label>
    </interactant>
    <organismsDiffer>false</organismsDiffer>
    <experiments>3</experiments>
</comment>
<comment type="interaction">
    <interactant intactId="EBI-6165891">
        <id>Q14696</id>
    </interactant>
    <interactant intactId="EBI-18899653">
        <id>Q6DHV7-2</id>
        <label>ADAL</label>
    </interactant>
    <organismsDiffer>false</organismsDiffer>
    <experiments>3</experiments>
</comment>
<comment type="interaction">
    <interactant intactId="EBI-6165891">
        <id>Q14696</id>
    </interactant>
    <interactant intactId="EBI-742928">
        <id>Q53H80</id>
        <label>AKIRIN2</label>
    </interactant>
    <organismsDiffer>false</organismsDiffer>
    <experiments>3</experiments>
</comment>
<comment type="interaction">
    <interactant intactId="EBI-6165891">
        <id>Q14696</id>
    </interactant>
    <interactant intactId="EBI-18898519">
        <id>Q5T1N1-2</id>
        <label>AKNAD1</label>
    </interactant>
    <organismsDiffer>false</organismsDiffer>
    <experiments>3</experiments>
</comment>
<comment type="interaction">
    <interactant intactId="EBI-6165891">
        <id>Q14696</id>
    </interactant>
    <interactant intactId="EBI-296087">
        <id>P31749</id>
        <label>AKT1</label>
    </interactant>
    <organismsDiffer>false</organismsDiffer>
    <experiments>3</experiments>
</comment>
<comment type="interaction">
    <interactant intactId="EBI-6165891">
        <id>Q14696</id>
    </interactant>
    <interactant intactId="EBI-2556079">
        <id>Q8WUF8</id>
        <label>ARB2A</label>
    </interactant>
    <organismsDiffer>false</organismsDiffer>
    <experiments>3</experiments>
</comment>
<comment type="interaction">
    <interactant intactId="EBI-6165891">
        <id>Q14696</id>
    </interactant>
    <interactant intactId="EBI-540797">
        <id>Q9UBL3</id>
        <label>ASH2L</label>
    </interactant>
    <organismsDiffer>false</organismsDiffer>
    <experiments>3</experiments>
</comment>
<comment type="interaction">
    <interactant intactId="EBI-6165891">
        <id>Q14696</id>
    </interactant>
    <interactant intactId="EBI-8650380">
        <id>Q96A05</id>
        <label>ATP6V1E2</label>
    </interactant>
    <organismsDiffer>false</organismsDiffer>
    <experiments>3</experiments>
</comment>
<comment type="interaction">
    <interactant intactId="EBI-6165891">
        <id>Q14696</id>
    </interactant>
    <interactant intactId="EBI-10988864">
        <id>P46379-2</id>
        <label>BAG6</label>
    </interactant>
    <organismsDiffer>false</organismsDiffer>
    <experiments>3</experiments>
</comment>
<comment type="interaction">
    <interactant intactId="EBI-6165891">
        <id>Q14696</id>
    </interactant>
    <interactant intactId="EBI-744076">
        <id>Q96FH0</id>
        <label>BORCS8</label>
    </interactant>
    <organismsDiffer>false</organismsDiffer>
    <experiments>3</experiments>
</comment>
<comment type="interaction">
    <interactant intactId="EBI-6165891">
        <id>Q14696</id>
    </interactant>
    <interactant intactId="EBI-12954949">
        <id>Q9HAS0</id>
        <label>C17orf75</label>
    </interactant>
    <organismsDiffer>false</organismsDiffer>
    <experiments>3</experiments>
</comment>
<comment type="interaction">
    <interactant intactId="EBI-6165891">
        <id>Q14696</id>
    </interactant>
    <interactant intactId="EBI-11063830">
        <id>Q86X02</id>
        <label>CDR2L</label>
    </interactant>
    <organismsDiffer>false</organismsDiffer>
    <experiments>3</experiments>
</comment>
<comment type="interaction">
    <interactant intactId="EBI-6165891">
        <id>Q14696</id>
    </interactant>
    <interactant intactId="EBI-11028020">
        <id>Q86UT8</id>
        <label>CENATAC</label>
    </interactant>
    <organismsDiffer>false</organismsDiffer>
    <experiments>3</experiments>
</comment>
<comment type="interaction">
    <interactant intactId="EBI-6165891">
        <id>Q14696</id>
    </interactant>
    <interactant intactId="EBI-1003700">
        <id>Q9H3R5</id>
        <label>CENPH</label>
    </interactant>
    <organismsDiffer>false</organismsDiffer>
    <experiments>3</experiments>
</comment>
<comment type="interaction">
    <interactant intactId="EBI-6165891">
        <id>Q14696</id>
    </interactant>
    <interactant intactId="EBI-5454898">
        <id>Q96BP2</id>
        <label>CHCHD1</label>
    </interactant>
    <organismsDiffer>false</organismsDiffer>
    <experiments>3</experiments>
</comment>
<comment type="interaction">
    <interactant intactId="EBI-6165891">
        <id>Q14696</id>
    </interactant>
    <interactant intactId="EBI-2559831">
        <id>Q92989</id>
        <label>CLP1</label>
    </interactant>
    <organismsDiffer>false</organismsDiffer>
    <experiments>3</experiments>
</comment>
<comment type="interaction">
    <interactant intactId="EBI-6165891">
        <id>Q14696</id>
    </interactant>
    <interactant intactId="EBI-12907584">
        <id>Q92600-3</id>
        <label>CNOT9</label>
    </interactant>
    <organismsDiffer>false</organismsDiffer>
    <experiments>3</experiments>
</comment>
<comment type="interaction">
    <interactant intactId="EBI-6165891">
        <id>Q14696</id>
    </interactant>
    <interactant intactId="EBI-2528309">
        <id>Q03692</id>
        <label>COL10A1</label>
    </interactant>
    <organismsDiffer>false</organismsDiffer>
    <experiments>3</experiments>
</comment>
<comment type="interaction">
    <interactant intactId="EBI-6165891">
        <id>Q14696</id>
    </interactant>
    <interactant intactId="EBI-983038">
        <id>P08123</id>
        <label>COL1A2</label>
    </interactant>
    <organismsDiffer>false</organismsDiffer>
    <experiments>3</experiments>
</comment>
<comment type="interaction">
    <interactant intactId="EBI-6165891">
        <id>Q14696</id>
    </interactant>
    <interactant intactId="EBI-6570698">
        <id>Q96I36</id>
        <label>COX14</label>
    </interactant>
    <organismsDiffer>false</organismsDiffer>
    <experiments>3</experiments>
</comment>
<comment type="interaction">
    <interactant intactId="EBI-6165891">
        <id>Q14696</id>
    </interactant>
    <interactant intactId="EBI-715032">
        <id>P20674</id>
        <label>COX5A</label>
    </interactant>
    <organismsDiffer>false</organismsDiffer>
    <experiments>3</experiments>
</comment>
<comment type="interaction">
    <interactant intactId="EBI-6165891">
        <id>Q14696</id>
    </interactant>
    <interactant intactId="EBI-714918">
        <id>Q9NTM9</id>
        <label>CUTC</label>
    </interactant>
    <organismsDiffer>false</organismsDiffer>
    <experiments>3</experiments>
</comment>
<comment type="interaction">
    <interactant intactId="EBI-6165891">
        <id>Q14696</id>
    </interactant>
    <interactant intactId="EBI-3924028">
        <id>Q9HBI6</id>
        <label>CYP4F11</label>
    </interactant>
    <organismsDiffer>false</organismsDiffer>
    <experiments>3</experiments>
</comment>
<comment type="interaction">
    <interactant intactId="EBI-6165891">
        <id>Q14696</id>
    </interactant>
    <interactant intactId="EBI-351257">
        <id>P26196</id>
        <label>DDX6</label>
    </interactant>
    <organismsDiffer>false</organismsDiffer>
    <experiments>3</experiments>
</comment>
<comment type="interaction">
    <interactant intactId="EBI-6165891">
        <id>Q14696</id>
    </interactant>
    <interactant intactId="EBI-744099">
        <id>Q9H0I2</id>
        <label>ENKD1</label>
    </interactant>
    <organismsDiffer>false</organismsDiffer>
    <experiments>3</experiments>
</comment>
<comment type="interaction">
    <interactant intactId="EBI-6165891">
        <id>Q14696</id>
    </interactant>
    <interactant intactId="EBI-751248">
        <id>Q8NE31</id>
        <label>FAM13C</label>
    </interactant>
    <organismsDiffer>false</organismsDiffer>
    <experiments>3</experiments>
</comment>
<comment type="interaction">
    <interactant intactId="EBI-6165891">
        <id>Q14696</id>
    </interactant>
    <interactant intactId="EBI-2513774">
        <id>O95363</id>
        <label>FARS2</label>
    </interactant>
    <organismsDiffer>false</organismsDiffer>
    <experiments>3</experiments>
</comment>
<comment type="interaction">
    <interactant intactId="EBI-6165891">
        <id>Q14696</id>
    </interactant>
    <interactant intactId="EBI-3908910">
        <id>P12319</id>
        <label>FCER1A</label>
    </interactant>
    <organismsDiffer>false</organismsDiffer>
    <experiments>3</experiments>
</comment>
<comment type="interaction">
    <interactant intactId="EBI-6165891">
        <id>Q14696</id>
    </interactant>
    <interactant intactId="EBI-744104">
        <id>P55040</id>
        <label>GEM</label>
    </interactant>
    <organismsDiffer>false</organismsDiffer>
    <experiments>3</experiments>
</comment>
<comment type="interaction">
    <interactant intactId="EBI-6165891">
        <id>Q14696</id>
    </interactant>
    <interactant intactId="EBI-4403685">
        <id>Q7Z5G4</id>
        <label>GOLGA7</label>
    </interactant>
    <organismsDiffer>false</organismsDiffer>
    <experiments>3</experiments>
</comment>
<comment type="interaction">
    <interactant intactId="EBI-6165891">
        <id>Q14696</id>
    </interactant>
    <interactant intactId="EBI-746309">
        <id>Q92917</id>
        <label>GPKOW</label>
    </interactant>
    <organismsDiffer>false</organismsDiffer>
    <experiments>3</experiments>
</comment>
<comment type="interaction">
    <interactant intactId="EBI-6165891">
        <id>Q14696</id>
    </interactant>
    <interactant intactId="EBI-740290">
        <id>Q969Y2</id>
        <label>GTPBP3</label>
    </interactant>
    <organismsDiffer>false</organismsDiffer>
    <experiments>3</experiments>
</comment>
<comment type="interaction">
    <interactant intactId="EBI-6165891">
        <id>Q14696</id>
    </interactant>
    <interactant intactId="EBI-13318575">
        <id>P0C5Z0</id>
        <label>H2AB3</label>
    </interactant>
    <organismsDiffer>false</organismsDiffer>
    <experiments>3</experiments>
</comment>
<comment type="interaction">
    <interactant intactId="EBI-6165891">
        <id>Q14696</id>
    </interactant>
    <interactant intactId="EBI-2685549">
        <id>C9JCN9</id>
        <label>HSBP1L1</label>
    </interactant>
    <organismsDiffer>false</organismsDiffer>
    <experiments>3</experiments>
</comment>
<comment type="interaction">
    <interactant intactId="EBI-6165891">
        <id>Q14696</id>
    </interactant>
    <interactant intactId="EBI-12837046">
        <id>P05019-2</id>
        <label>IGF1</label>
    </interactant>
    <organismsDiffer>false</organismsDiffer>
    <experiments>3</experiments>
</comment>
<comment type="interaction">
    <interactant intactId="EBI-6165891">
        <id>Q14696</id>
    </interactant>
    <interactant intactId="EBI-948266">
        <id>O14901</id>
        <label>KLF11</label>
    </interactant>
    <organismsDiffer>false</organismsDiffer>
    <experiments>3</experiments>
</comment>
<comment type="interaction">
    <interactant intactId="EBI-6165891">
        <id>Q14696</id>
    </interactant>
    <interactant intactId="EBI-11962058">
        <id>Q5T7P2</id>
        <label>LCE1A</label>
    </interactant>
    <organismsDiffer>false</organismsDiffer>
    <experiments>3</experiments>
</comment>
<comment type="interaction">
    <interactant intactId="EBI-6165891">
        <id>Q14696</id>
    </interactant>
    <interactant intactId="EBI-1539247">
        <id>Q9Y6Y9</id>
        <label>LY96</label>
    </interactant>
    <organismsDiffer>false</organismsDiffer>
    <experiments>3</experiments>
</comment>
<comment type="interaction">
    <interactant intactId="EBI-6165891">
        <id>Q14696</id>
    </interactant>
    <interactant intactId="EBI-751857">
        <id>O15481</id>
        <label>MAGEB4</label>
    </interactant>
    <organismsDiffer>false</organismsDiffer>
    <experiments>3</experiments>
</comment>
<comment type="interaction">
    <interactant intactId="EBI-6165891">
        <id>Q14696</id>
    </interactant>
    <interactant intactId="EBI-373144">
        <id>Q9GZQ8</id>
        <label>MAP1LC3B</label>
    </interactant>
    <organismsDiffer>false</organismsDiffer>
    <experiments>3</experiments>
</comment>
<comment type="interaction">
    <interactant intactId="EBI-6165891">
        <id>Q14696</id>
    </interactant>
    <interactant intactId="EBI-18899369">
        <id>Q9NXL9-3</id>
        <label>MCM9</label>
    </interactant>
    <organismsDiffer>false</organismsDiffer>
    <experiments>3</experiments>
</comment>
<comment type="interaction">
    <interactant intactId="EBI-6165891">
        <id>Q14696</id>
    </interactant>
    <interactant intactId="EBI-10195914">
        <id>P08582-2</id>
        <label>MELTF</label>
    </interactant>
    <organismsDiffer>false</organismsDiffer>
    <experiments>3</experiments>
</comment>
<comment type="interaction">
    <interactant intactId="EBI-6165891">
        <id>Q14696</id>
    </interactant>
    <interactant intactId="EBI-14141314">
        <id>Q9HBH9-2</id>
        <label>MKNK2</label>
    </interactant>
    <organismsDiffer>false</organismsDiffer>
    <experiments>3</experiments>
</comment>
<comment type="interaction">
    <interactant intactId="EBI-6165891">
        <id>Q14696</id>
    </interactant>
    <interactant intactId="EBI-5454865">
        <id>Q6IN84</id>
        <label>MRM1</label>
    </interactant>
    <organismsDiffer>false</organismsDiffer>
    <experiments>3</experiments>
</comment>
<comment type="interaction">
    <interactant intactId="EBI-6165891">
        <id>Q14696</id>
    </interactant>
    <interactant intactId="EBI-1042642">
        <id>Q9H7Z3</id>
        <label>NRDE2</label>
    </interactant>
    <organismsDiffer>false</organismsDiffer>
    <experiments>3</experiments>
</comment>
<comment type="interaction">
    <interactant intactId="EBI-6165891">
        <id>Q14696</id>
    </interactant>
    <interactant intactId="EBI-713832">
        <id>Q6P1K2</id>
        <label>PMF1</label>
    </interactant>
    <organismsDiffer>false</organismsDiffer>
    <experiments>3</experiments>
</comment>
<comment type="interaction">
    <interactant intactId="EBI-6165891">
        <id>Q14696</id>
    </interactant>
    <interactant intactId="EBI-347462">
        <id>P47897</id>
        <label>QARS1</label>
    </interactant>
    <organismsDiffer>false</organismsDiffer>
    <experiments>3</experiments>
</comment>
<comment type="interaction">
    <interactant intactId="EBI-6165891">
        <id>Q14696</id>
    </interactant>
    <interactant intactId="EBI-1504830">
        <id>Q9P2K3-2</id>
        <label>RCOR3</label>
    </interactant>
    <organismsDiffer>false</organismsDiffer>
    <experiments>3</experiments>
</comment>
<comment type="interaction">
    <interactant intactId="EBI-6165891">
        <id>Q14696</id>
    </interactant>
    <interactant intactId="EBI-22345187">
        <id>A0A0B4J2F2</id>
        <label>SIK1B</label>
    </interactant>
    <organismsDiffer>false</organismsDiffer>
    <experiments>3</experiments>
</comment>
<comment type="interaction">
    <interactant intactId="EBI-6165891">
        <id>Q14696</id>
    </interactant>
    <interactant intactId="EBI-358436">
        <id>Q12824-2</id>
        <label>SMARCB1</label>
    </interactant>
    <organismsDiffer>false</organismsDiffer>
    <experiments>3</experiments>
</comment>
<comment type="interaction">
    <interactant intactId="EBI-6165891">
        <id>Q14696</id>
    </interactant>
    <interactant intactId="EBI-10818513">
        <id>Q8IYK2</id>
        <label>TEKTL1</label>
    </interactant>
    <organismsDiffer>false</organismsDiffer>
    <experiments>3</experiments>
</comment>
<comment type="interaction">
    <interactant intactId="EBI-6165891">
        <id>Q14696</id>
    </interactant>
    <interactant intactId="EBI-12090309">
        <id>Q9BXU0</id>
        <label>TEX12</label>
    </interactant>
    <organismsDiffer>false</organismsDiffer>
    <experiments>3</experiments>
</comment>
<comment type="interaction">
    <interactant intactId="EBI-6165891">
        <id>Q14696</id>
    </interactant>
    <interactant intactId="EBI-18583507">
        <id>A0A1B0GUV7</id>
        <label>TEX48</label>
    </interactant>
    <organismsDiffer>false</organismsDiffer>
    <experiments>3</experiments>
</comment>
<comment type="interaction">
    <interactant intactId="EBI-6165891">
        <id>Q14696</id>
    </interactant>
    <interactant intactId="EBI-10977815">
        <id>P07951-2</id>
        <label>TPM2</label>
    </interactant>
    <organismsDiffer>false</organismsDiffer>
    <experiments>3</experiments>
</comment>
<comment type="interaction">
    <interactant intactId="EBI-6165891">
        <id>Q14696</id>
    </interactant>
    <interactant intactId="EBI-22217464">
        <id>Q9BQ50</id>
        <label>TREX2</label>
    </interactant>
    <organismsDiffer>false</organismsDiffer>
    <experiments>3</experiments>
</comment>
<comment type="interaction">
    <interactant intactId="EBI-6165891">
        <id>Q14696</id>
    </interactant>
    <interactant intactId="EBI-2515774">
        <id>Q8IZ69</id>
        <label>TRMT2A</label>
    </interactant>
    <organismsDiffer>false</organismsDiffer>
    <experiments>3</experiments>
</comment>
<comment type="interaction">
    <interactant intactId="EBI-6165891">
        <id>Q14696</id>
    </interactant>
    <interactant intactId="EBI-10220701">
        <id>A0A0B4J1Y2</id>
        <label>TTC21A</label>
    </interactant>
    <organismsDiffer>false</organismsDiffer>
    <experiments>3</experiments>
</comment>
<comment type="interaction">
    <interactant intactId="EBI-6165891">
        <id>Q14696</id>
    </interactant>
    <interactant intactId="EBI-9090990">
        <id>Q5W5X9-3</id>
        <label>TTC23</label>
    </interactant>
    <organismsDiffer>false</organismsDiffer>
    <experiments>3</experiments>
</comment>
<comment type="interaction">
    <interactant intactId="EBI-6165891">
        <id>Q14696</id>
    </interactant>
    <interactant intactId="EBI-2556931">
        <id>P19971</id>
        <label>TYMP</label>
    </interactant>
    <organismsDiffer>false</organismsDiffer>
    <experiments>3</experiments>
</comment>
<comment type="interaction">
    <interactant intactId="EBI-6165891">
        <id>Q14696</id>
    </interactant>
    <interactant intactId="EBI-741480">
        <id>Q9UMX0</id>
        <label>UBQLN1</label>
    </interactant>
    <organismsDiffer>false</organismsDiffer>
    <experiments>3</experiments>
</comment>
<comment type="interaction">
    <interactant intactId="EBI-6165891">
        <id>Q14696</id>
    </interactant>
    <interactant intactId="EBI-12856290">
        <id>Q6ZR52-3</id>
        <label>ZNF493</label>
    </interactant>
    <organismsDiffer>false</organismsDiffer>
    <experiments>3</experiments>
</comment>
<comment type="interaction">
    <interactant intactId="EBI-6165891">
        <id>Q14696</id>
    </interactant>
    <interactant intactId="EBI-5564776">
        <id>Q17R98</id>
        <label>ZNF827</label>
    </interactant>
    <organismsDiffer>false</organismsDiffer>
    <experiments>3</experiments>
</comment>
<comment type="interaction">
    <interactant intactId="EBI-6165891">
        <id>Q14696</id>
    </interactant>
    <interactant intactId="EBI-10225757">
        <id>Q08AG5</id>
        <label>ZNF844</label>
    </interactant>
    <organismsDiffer>false</organismsDiffer>
    <experiments>3</experiments>
</comment>
<comment type="subcellular location">
    <subcellularLocation>
        <location evidence="4 5">Endoplasmic reticulum</location>
    </subcellularLocation>
    <text evidence="1">Released from apoptotic cells and shed photoreceptor outer segments.</text>
</comment>
<comment type="alternative products">
    <event type="alternative splicing"/>
    <isoform>
        <id>Q14696-1</id>
        <name>1</name>
        <sequence type="displayed"/>
    </isoform>
    <isoform>
        <id>Q14696-2</id>
        <name>2</name>
        <sequence type="described" ref="VSP_055492 VSP_055493"/>
    </isoform>
</comment>
<comment type="domain">
    <text evidence="1">The chaperone domain provides a folding template for proper folding of the beta-propeller (BP) domains of LRP5/6.</text>
</comment>
<comment type="domain">
    <text evidence="1">The escort domain ensures LRP5/6 safe-trafficking from the ER to the Golgi by preventing premature ligand-binding.</text>
</comment>
<comment type="disease" evidence="7">
    <disease id="DI-05682">
        <name>Osteogenesis imperfecta 20</name>
        <acronym>OI20</acronym>
        <description>An autosomal recessive form of osteogenesis imperfecta, a disorder of bone formation characterized by low bone mass, bone fragility and susceptibility to fractures after minimal trauma. Disease severity ranges from very mild forms without fractures to intrauterine fractures and perinatal lethality. Extraskeletal manifestations, which affect a variable number of patients, are dentinogenesis imperfecta, hearing loss, and blue sclerae. OI20 is a progressive deforming form characterized by osteopenia, skeletal deformity, healed fractures, and newly-acquired fractures. Death due to respiratory failure can occur in some patients.</description>
        <dbReference type="MIM" id="618644"/>
    </disease>
    <text>The disease is caused by variants affecting the gene represented in this entry.</text>
</comment>
<comment type="similarity">
    <text evidence="9">Belongs to the MESD family.</text>
</comment>
<comment type="sequence caution" evidence="9">
    <conflict type="erroneous initiation">
        <sequence resource="EMBL-CDS" id="BAA07640"/>
    </conflict>
    <text>Extended N-terminus.</text>
</comment>
<organism>
    <name type="scientific">Homo sapiens</name>
    <name type="common">Human</name>
    <dbReference type="NCBI Taxonomy" id="9606"/>
    <lineage>
        <taxon>Eukaryota</taxon>
        <taxon>Metazoa</taxon>
        <taxon>Chordata</taxon>
        <taxon>Craniata</taxon>
        <taxon>Vertebrata</taxon>
        <taxon>Euteleostomi</taxon>
        <taxon>Mammalia</taxon>
        <taxon>Eutheria</taxon>
        <taxon>Euarchontoglires</taxon>
        <taxon>Primates</taxon>
        <taxon>Haplorrhini</taxon>
        <taxon>Catarrhini</taxon>
        <taxon>Hominidae</taxon>
        <taxon>Homo</taxon>
    </lineage>
</organism>
<feature type="signal peptide" evidence="2">
    <location>
        <begin position="1"/>
        <end position="33"/>
    </location>
</feature>
<feature type="chain" id="PRO_0000096443" description="LRP chaperone MESD">
    <location>
        <begin position="34"/>
        <end position="234"/>
    </location>
</feature>
<feature type="region of interest" description="Chaperone domain" evidence="1">
    <location>
        <begin position="1"/>
        <end position="164"/>
    </location>
</feature>
<feature type="region of interest" description="Disordered" evidence="3">
    <location>
        <begin position="31"/>
        <end position="95"/>
    </location>
</feature>
<feature type="region of interest" description="Escort domain" evidence="1">
    <location>
        <begin position="165"/>
        <end position="204"/>
    </location>
</feature>
<feature type="region of interest" description="Disordered" evidence="3">
    <location>
        <begin position="187"/>
        <end position="234"/>
    </location>
</feature>
<feature type="short sequence motif" description="Prevents secretion from ER">
    <location>
        <begin position="231"/>
        <end position="234"/>
    </location>
</feature>
<feature type="compositionally biased region" description="Basic and acidic residues" evidence="3">
    <location>
        <begin position="54"/>
        <end position="70"/>
    </location>
</feature>
<feature type="compositionally biased region" description="Acidic residues" evidence="3">
    <location>
        <begin position="71"/>
        <end position="80"/>
    </location>
</feature>
<feature type="compositionally biased region" description="Basic and acidic residues" evidence="3">
    <location>
        <begin position="196"/>
        <end position="234"/>
    </location>
</feature>
<feature type="glycosylation site" description="N-linked (GlcNAc...) asparagine" evidence="2">
    <location>
        <position position="201"/>
    </location>
</feature>
<feature type="splice variant" id="VSP_055492" description="In isoform 2." evidence="8">
    <original>KDDDIEEGDLPEHKRPSAPVDFSKIDPSKPESILKMTKKGKTLMMFVTVSGSPTEKETEEITSLWQG</original>
    <variation>TPEPLPVLPEVPSTCACLSSASLIWTCFSHLSPHALVKRVWPPAKQGLGGKESPASAWLPHRGGELK</variation>
    <location>
        <begin position="72"/>
        <end position="138"/>
    </location>
</feature>
<feature type="splice variant" id="VSP_055493" description="In isoform 2." evidence="8">
    <location>
        <begin position="139"/>
        <end position="234"/>
    </location>
</feature>
<feature type="sequence variant" id="VAR_083534" description="In OI20." evidence="7">
    <location>
        <begin position="226"/>
        <end position="234"/>
    </location>
</feature>
<sequence length="234" mass="26077">MAASRWARKAVVLLCASDLLLLLLLLPPPGSCAAEGSPGTPDESTPPPRKKKKDIRDYNDADMARLLEQWEKDDDIEEGDLPEHKRPSAPVDFSKIDPSKPESILKMTKKGKTLMMFVTVSGSPTEKETEEITSLWQGSLFNANYDVQRFIVGSDRAIFMLRDGSYAWEIKDFLVGQDRCADVTLEGQVYPGKGGGSKEKNKTKQDKGKKKKEGDLKSRSSKEENRAGNKREDL</sequence>
<proteinExistence type="evidence at protein level"/>
<name>MESD_HUMAN</name>